<evidence type="ECO:0000255" key="1">
    <source>
        <dbReference type="HAMAP-Rule" id="MF_00122"/>
    </source>
</evidence>
<feature type="chain" id="PRO_0000105287" description="Glutamyl-tRNA(Gln) amidotransferase subunit C">
    <location>
        <begin position="1"/>
        <end position="95"/>
    </location>
</feature>
<gene>
    <name evidence="1" type="primary">gatC</name>
    <name type="ordered locus">CC_2438</name>
</gene>
<reference key="1">
    <citation type="journal article" date="2001" name="Proc. Natl. Acad. Sci. U.S.A.">
        <title>Complete genome sequence of Caulobacter crescentus.</title>
        <authorList>
            <person name="Nierman W.C."/>
            <person name="Feldblyum T.V."/>
            <person name="Laub M.T."/>
            <person name="Paulsen I.T."/>
            <person name="Nelson K.E."/>
            <person name="Eisen J.A."/>
            <person name="Heidelberg J.F."/>
            <person name="Alley M.R.K."/>
            <person name="Ohta N."/>
            <person name="Maddock J.R."/>
            <person name="Potocka I."/>
            <person name="Nelson W.C."/>
            <person name="Newton A."/>
            <person name="Stephens C."/>
            <person name="Phadke N.D."/>
            <person name="Ely B."/>
            <person name="DeBoy R.T."/>
            <person name="Dodson R.J."/>
            <person name="Durkin A.S."/>
            <person name="Gwinn M.L."/>
            <person name="Haft D.H."/>
            <person name="Kolonay J.F."/>
            <person name="Smit J."/>
            <person name="Craven M.B."/>
            <person name="Khouri H.M."/>
            <person name="Shetty J."/>
            <person name="Berry K.J."/>
            <person name="Utterback T.R."/>
            <person name="Tran K."/>
            <person name="Wolf A.M."/>
            <person name="Vamathevan J.J."/>
            <person name="Ermolaeva M.D."/>
            <person name="White O."/>
            <person name="Salzberg S.L."/>
            <person name="Venter J.C."/>
            <person name="Shapiro L."/>
            <person name="Fraser C.M."/>
        </authorList>
    </citation>
    <scope>NUCLEOTIDE SEQUENCE [LARGE SCALE GENOMIC DNA]</scope>
    <source>
        <strain>ATCC 19089 / CIP 103742 / CB 15</strain>
    </source>
</reference>
<accession>Q9A5K9</accession>
<keyword id="KW-0067">ATP-binding</keyword>
<keyword id="KW-0436">Ligase</keyword>
<keyword id="KW-0547">Nucleotide-binding</keyword>
<keyword id="KW-0648">Protein biosynthesis</keyword>
<keyword id="KW-1185">Reference proteome</keyword>
<organism>
    <name type="scientific">Caulobacter vibrioides (strain ATCC 19089 / CIP 103742 / CB 15)</name>
    <name type="common">Caulobacter crescentus</name>
    <dbReference type="NCBI Taxonomy" id="190650"/>
    <lineage>
        <taxon>Bacteria</taxon>
        <taxon>Pseudomonadati</taxon>
        <taxon>Pseudomonadota</taxon>
        <taxon>Alphaproteobacteria</taxon>
        <taxon>Caulobacterales</taxon>
        <taxon>Caulobacteraceae</taxon>
        <taxon>Caulobacter</taxon>
    </lineage>
</organism>
<dbReference type="EC" id="6.3.5.-" evidence="1"/>
<dbReference type="EMBL" id="AE005673">
    <property type="protein sequence ID" value="AAK24409.1"/>
    <property type="molecule type" value="Genomic_DNA"/>
</dbReference>
<dbReference type="PIR" id="E87551">
    <property type="entry name" value="E87551"/>
</dbReference>
<dbReference type="RefSeq" id="NP_421241.1">
    <property type="nucleotide sequence ID" value="NC_002696.2"/>
</dbReference>
<dbReference type="RefSeq" id="WP_010920296.1">
    <property type="nucleotide sequence ID" value="NC_002696.2"/>
</dbReference>
<dbReference type="SMR" id="Q9A5K9"/>
<dbReference type="STRING" id="190650.CC_2438"/>
<dbReference type="EnsemblBacteria" id="AAK24409">
    <property type="protein sequence ID" value="AAK24409"/>
    <property type="gene ID" value="CC_2438"/>
</dbReference>
<dbReference type="KEGG" id="ccr:CC_2438"/>
<dbReference type="PATRIC" id="fig|190650.5.peg.2455"/>
<dbReference type="eggNOG" id="COG0721">
    <property type="taxonomic scope" value="Bacteria"/>
</dbReference>
<dbReference type="HOGENOM" id="CLU_105899_2_0_5"/>
<dbReference type="BioCyc" id="CAULO:CC2438-MONOMER"/>
<dbReference type="Proteomes" id="UP000001816">
    <property type="component" value="Chromosome"/>
</dbReference>
<dbReference type="GO" id="GO:0050566">
    <property type="term" value="F:asparaginyl-tRNA synthase (glutamine-hydrolyzing) activity"/>
    <property type="evidence" value="ECO:0007669"/>
    <property type="project" value="RHEA"/>
</dbReference>
<dbReference type="GO" id="GO:0005524">
    <property type="term" value="F:ATP binding"/>
    <property type="evidence" value="ECO:0007669"/>
    <property type="project" value="UniProtKB-KW"/>
</dbReference>
<dbReference type="GO" id="GO:0050567">
    <property type="term" value="F:glutaminyl-tRNA synthase (glutamine-hydrolyzing) activity"/>
    <property type="evidence" value="ECO:0007669"/>
    <property type="project" value="UniProtKB-UniRule"/>
</dbReference>
<dbReference type="GO" id="GO:0070681">
    <property type="term" value="P:glutaminyl-tRNAGln biosynthesis via transamidation"/>
    <property type="evidence" value="ECO:0007669"/>
    <property type="project" value="TreeGrafter"/>
</dbReference>
<dbReference type="GO" id="GO:0006450">
    <property type="term" value="P:regulation of translational fidelity"/>
    <property type="evidence" value="ECO:0007669"/>
    <property type="project" value="InterPro"/>
</dbReference>
<dbReference type="GO" id="GO:0006412">
    <property type="term" value="P:translation"/>
    <property type="evidence" value="ECO:0007669"/>
    <property type="project" value="UniProtKB-UniRule"/>
</dbReference>
<dbReference type="Gene3D" id="1.10.20.60">
    <property type="entry name" value="Glu-tRNAGln amidotransferase C subunit, N-terminal domain"/>
    <property type="match status" value="1"/>
</dbReference>
<dbReference type="HAMAP" id="MF_00122">
    <property type="entry name" value="GatC"/>
    <property type="match status" value="1"/>
</dbReference>
<dbReference type="InterPro" id="IPR036113">
    <property type="entry name" value="Asp/Glu-ADT_sf_sub_c"/>
</dbReference>
<dbReference type="InterPro" id="IPR003837">
    <property type="entry name" value="GatC"/>
</dbReference>
<dbReference type="NCBIfam" id="TIGR00135">
    <property type="entry name" value="gatC"/>
    <property type="match status" value="1"/>
</dbReference>
<dbReference type="PANTHER" id="PTHR15004">
    <property type="entry name" value="GLUTAMYL-TRNA(GLN) AMIDOTRANSFERASE SUBUNIT C, MITOCHONDRIAL"/>
    <property type="match status" value="1"/>
</dbReference>
<dbReference type="PANTHER" id="PTHR15004:SF0">
    <property type="entry name" value="GLUTAMYL-TRNA(GLN) AMIDOTRANSFERASE SUBUNIT C, MITOCHONDRIAL"/>
    <property type="match status" value="1"/>
</dbReference>
<dbReference type="Pfam" id="PF02686">
    <property type="entry name" value="GatC"/>
    <property type="match status" value="1"/>
</dbReference>
<dbReference type="SUPFAM" id="SSF141000">
    <property type="entry name" value="Glu-tRNAGln amidotransferase C subunit"/>
    <property type="match status" value="1"/>
</dbReference>
<comment type="function">
    <text evidence="1">Allows the formation of correctly charged Asn-tRNA(Asn) or Gln-tRNA(Gln) through the transamidation of misacylated Asp-tRNA(Asn) or Glu-tRNA(Gln) in organisms which lack either or both of asparaginyl-tRNA or glutaminyl-tRNA synthetases. The reaction takes place in the presence of glutamine and ATP through an activated phospho-Asp-tRNA(Asn) or phospho-Glu-tRNA(Gln).</text>
</comment>
<comment type="catalytic activity">
    <reaction evidence="1">
        <text>L-glutamyl-tRNA(Gln) + L-glutamine + ATP + H2O = L-glutaminyl-tRNA(Gln) + L-glutamate + ADP + phosphate + H(+)</text>
        <dbReference type="Rhea" id="RHEA:17521"/>
        <dbReference type="Rhea" id="RHEA-COMP:9681"/>
        <dbReference type="Rhea" id="RHEA-COMP:9684"/>
        <dbReference type="ChEBI" id="CHEBI:15377"/>
        <dbReference type="ChEBI" id="CHEBI:15378"/>
        <dbReference type="ChEBI" id="CHEBI:29985"/>
        <dbReference type="ChEBI" id="CHEBI:30616"/>
        <dbReference type="ChEBI" id="CHEBI:43474"/>
        <dbReference type="ChEBI" id="CHEBI:58359"/>
        <dbReference type="ChEBI" id="CHEBI:78520"/>
        <dbReference type="ChEBI" id="CHEBI:78521"/>
        <dbReference type="ChEBI" id="CHEBI:456216"/>
    </reaction>
</comment>
<comment type="catalytic activity">
    <reaction evidence="1">
        <text>L-aspartyl-tRNA(Asn) + L-glutamine + ATP + H2O = L-asparaginyl-tRNA(Asn) + L-glutamate + ADP + phosphate + 2 H(+)</text>
        <dbReference type="Rhea" id="RHEA:14513"/>
        <dbReference type="Rhea" id="RHEA-COMP:9674"/>
        <dbReference type="Rhea" id="RHEA-COMP:9677"/>
        <dbReference type="ChEBI" id="CHEBI:15377"/>
        <dbReference type="ChEBI" id="CHEBI:15378"/>
        <dbReference type="ChEBI" id="CHEBI:29985"/>
        <dbReference type="ChEBI" id="CHEBI:30616"/>
        <dbReference type="ChEBI" id="CHEBI:43474"/>
        <dbReference type="ChEBI" id="CHEBI:58359"/>
        <dbReference type="ChEBI" id="CHEBI:78515"/>
        <dbReference type="ChEBI" id="CHEBI:78516"/>
        <dbReference type="ChEBI" id="CHEBI:456216"/>
    </reaction>
</comment>
<comment type="subunit">
    <text evidence="1">Heterotrimer of A, B and C subunits.</text>
</comment>
<comment type="similarity">
    <text evidence="1">Belongs to the GatC family.</text>
</comment>
<proteinExistence type="inferred from homology"/>
<protein>
    <recommendedName>
        <fullName>Glutamyl-tRNA(Gln) amidotransferase subunit C</fullName>
        <shortName>Glu-ADT subunit C</shortName>
        <ecNumber evidence="1">6.3.5.-</ecNumber>
    </recommendedName>
</protein>
<sequence length="95" mass="10215">MAIDAATVRKVARLARIATPEERLEPLAQELNGIMTWIEQLAEVDTDGCEPLTSVVAAGLPLREDVVTMGGDPARVTSNAPKSINNFFVVPKVVE</sequence>
<name>GATC_CAUVC</name>